<organism>
    <name type="scientific">Pfiesteria piscicida</name>
    <name type="common">Dinoflagellate</name>
    <dbReference type="NCBI Taxonomy" id="71001"/>
    <lineage>
        <taxon>Eukaryota</taxon>
        <taxon>Sar</taxon>
        <taxon>Alveolata</taxon>
        <taxon>Dinophyceae</taxon>
        <taxon>Peridiniales</taxon>
        <taxon>Pfiesteriaceae</taxon>
        <taxon>Pfiesteria</taxon>
    </lineage>
</organism>
<accession>A3E3H0</accession>
<name>CALM_PFIPI</name>
<proteinExistence type="evidence at transcript level"/>
<protein>
    <recommendedName>
        <fullName>Calmodulin</fullName>
        <shortName>CaM</shortName>
    </recommendedName>
</protein>
<keyword id="KW-0007">Acetylation</keyword>
<keyword id="KW-0106">Calcium</keyword>
<keyword id="KW-0479">Metal-binding</keyword>
<keyword id="KW-0488">Methylation</keyword>
<keyword id="KW-0677">Repeat</keyword>
<comment type="function">
    <text>Calmodulin mediates the control of a large number of enzymes, ion channels and other proteins by Ca(2+). Among the enzymes to be stimulated by the calmodulin-Ca(2+) complex are a number of protein kinases and phosphatases.</text>
</comment>
<comment type="miscellaneous">
    <text>This protein has four functional calcium-binding sites.</text>
</comment>
<comment type="similarity">
    <text evidence="3">Belongs to the calmodulin family.</text>
</comment>
<sequence length="149" mass="16791">MADQLTEEQIAEFKEAFSLFDKDGDGTITTKELGTVMRSLGQNPTEAELQDMINEVDADGNGTIDFPEFLSLMARKMKDTDTEEELIEAFKVFDRDGNGFISAAELRHVMTNLGEKLTDEEVDEMIREADVDGDGQINYEEFVKMMMAK</sequence>
<evidence type="ECO:0000250" key="1"/>
<evidence type="ECO:0000255" key="2">
    <source>
        <dbReference type="PROSITE-ProRule" id="PRU00448"/>
    </source>
</evidence>
<evidence type="ECO:0000305" key="3"/>
<feature type="initiator methionine" description="Removed" evidence="1">
    <location>
        <position position="1"/>
    </location>
</feature>
<feature type="chain" id="PRO_0000334496" description="Calmodulin">
    <location>
        <begin position="2"/>
        <end position="149"/>
    </location>
</feature>
<feature type="domain" description="EF-hand 1" evidence="2">
    <location>
        <begin position="8"/>
        <end position="43"/>
    </location>
</feature>
<feature type="domain" description="EF-hand 2" evidence="2">
    <location>
        <begin position="44"/>
        <end position="79"/>
    </location>
</feature>
<feature type="domain" description="EF-hand 3" evidence="2">
    <location>
        <begin position="81"/>
        <end position="116"/>
    </location>
</feature>
<feature type="domain" description="EF-hand 4" evidence="2">
    <location>
        <begin position="117"/>
        <end position="149"/>
    </location>
</feature>
<feature type="binding site" evidence="2">
    <location>
        <position position="21"/>
    </location>
    <ligand>
        <name>Ca(2+)</name>
        <dbReference type="ChEBI" id="CHEBI:29108"/>
        <label>1</label>
    </ligand>
</feature>
<feature type="binding site" evidence="2">
    <location>
        <position position="23"/>
    </location>
    <ligand>
        <name>Ca(2+)</name>
        <dbReference type="ChEBI" id="CHEBI:29108"/>
        <label>1</label>
    </ligand>
</feature>
<feature type="binding site" evidence="2">
    <location>
        <position position="25"/>
    </location>
    <ligand>
        <name>Ca(2+)</name>
        <dbReference type="ChEBI" id="CHEBI:29108"/>
        <label>1</label>
    </ligand>
</feature>
<feature type="binding site" evidence="2">
    <location>
        <position position="27"/>
    </location>
    <ligand>
        <name>Ca(2+)</name>
        <dbReference type="ChEBI" id="CHEBI:29108"/>
        <label>1</label>
    </ligand>
</feature>
<feature type="binding site" evidence="2">
    <location>
        <position position="32"/>
    </location>
    <ligand>
        <name>Ca(2+)</name>
        <dbReference type="ChEBI" id="CHEBI:29108"/>
        <label>1</label>
    </ligand>
</feature>
<feature type="binding site" evidence="2">
    <location>
        <position position="57"/>
    </location>
    <ligand>
        <name>Ca(2+)</name>
        <dbReference type="ChEBI" id="CHEBI:29108"/>
        <label>2</label>
    </ligand>
</feature>
<feature type="binding site" evidence="2">
    <location>
        <position position="59"/>
    </location>
    <ligand>
        <name>Ca(2+)</name>
        <dbReference type="ChEBI" id="CHEBI:29108"/>
        <label>2</label>
    </ligand>
</feature>
<feature type="binding site" evidence="2">
    <location>
        <position position="61"/>
    </location>
    <ligand>
        <name>Ca(2+)</name>
        <dbReference type="ChEBI" id="CHEBI:29108"/>
        <label>2</label>
    </ligand>
</feature>
<feature type="binding site" evidence="2">
    <location>
        <position position="63"/>
    </location>
    <ligand>
        <name>Ca(2+)</name>
        <dbReference type="ChEBI" id="CHEBI:29108"/>
        <label>2</label>
    </ligand>
</feature>
<feature type="binding site" evidence="2">
    <location>
        <position position="68"/>
    </location>
    <ligand>
        <name>Ca(2+)</name>
        <dbReference type="ChEBI" id="CHEBI:29108"/>
        <label>2</label>
    </ligand>
</feature>
<feature type="binding site" evidence="2">
    <location>
        <position position="94"/>
    </location>
    <ligand>
        <name>Ca(2+)</name>
        <dbReference type="ChEBI" id="CHEBI:29108"/>
        <label>3</label>
    </ligand>
</feature>
<feature type="binding site" evidence="2">
    <location>
        <position position="96"/>
    </location>
    <ligand>
        <name>Ca(2+)</name>
        <dbReference type="ChEBI" id="CHEBI:29108"/>
        <label>3</label>
    </ligand>
</feature>
<feature type="binding site" evidence="2">
    <location>
        <position position="98"/>
    </location>
    <ligand>
        <name>Ca(2+)</name>
        <dbReference type="ChEBI" id="CHEBI:29108"/>
        <label>3</label>
    </ligand>
</feature>
<feature type="binding site" evidence="2">
    <location>
        <position position="105"/>
    </location>
    <ligand>
        <name>Ca(2+)</name>
        <dbReference type="ChEBI" id="CHEBI:29108"/>
        <label>3</label>
    </ligand>
</feature>
<feature type="binding site" evidence="2">
    <location>
        <position position="130"/>
    </location>
    <ligand>
        <name>Ca(2+)</name>
        <dbReference type="ChEBI" id="CHEBI:29108"/>
        <label>4</label>
    </ligand>
</feature>
<feature type="binding site" evidence="2">
    <location>
        <position position="132"/>
    </location>
    <ligand>
        <name>Ca(2+)</name>
        <dbReference type="ChEBI" id="CHEBI:29108"/>
        <label>4</label>
    </ligand>
</feature>
<feature type="binding site" evidence="2">
    <location>
        <position position="134"/>
    </location>
    <ligand>
        <name>Ca(2+)</name>
        <dbReference type="ChEBI" id="CHEBI:29108"/>
        <label>4</label>
    </ligand>
</feature>
<feature type="binding site" evidence="2">
    <location>
        <position position="136"/>
    </location>
    <ligand>
        <name>Ca(2+)</name>
        <dbReference type="ChEBI" id="CHEBI:29108"/>
        <label>4</label>
    </ligand>
</feature>
<feature type="binding site" evidence="2">
    <location>
        <position position="141"/>
    </location>
    <ligand>
        <name>Ca(2+)</name>
        <dbReference type="ChEBI" id="CHEBI:29108"/>
        <label>4</label>
    </ligand>
</feature>
<feature type="modified residue" description="N-acetylalanine" evidence="1">
    <location>
        <position position="2"/>
    </location>
</feature>
<feature type="modified residue" description="N6,N6,N6-trimethyllysine" evidence="1">
    <location>
        <position position="116"/>
    </location>
</feature>
<reference key="1">
    <citation type="journal article" date="2007" name="Proc. Natl. Acad. Sci. U.S.A.">
        <title>Spliced leader RNA trans-splicing in dinoflagellates.</title>
        <authorList>
            <person name="Zhang H."/>
            <person name="Hou Y."/>
            <person name="Miranda L."/>
            <person name="Campbell D.A."/>
            <person name="Sturm N.R."/>
            <person name="Gaasterland T."/>
            <person name="Lin S."/>
        </authorList>
    </citation>
    <scope>NUCLEOTIDE SEQUENCE [MRNA]</scope>
</reference>
<dbReference type="EMBL" id="DQ864822">
    <property type="protein sequence ID" value="ABI14237.1"/>
    <property type="molecule type" value="mRNA"/>
</dbReference>
<dbReference type="EMBL" id="DQ864823">
    <property type="protein sequence ID" value="ABI14238.1"/>
    <property type="molecule type" value="mRNA"/>
</dbReference>
<dbReference type="EMBL" id="DQ864824">
    <property type="protein sequence ID" value="ABI14239.1"/>
    <property type="molecule type" value="mRNA"/>
</dbReference>
<dbReference type="EMBL" id="DQ864825">
    <property type="protein sequence ID" value="ABI14240.1"/>
    <property type="molecule type" value="mRNA"/>
</dbReference>
<dbReference type="EMBL" id="DQ864826">
    <property type="protein sequence ID" value="ABI14241.1"/>
    <property type="molecule type" value="mRNA"/>
</dbReference>
<dbReference type="EMBL" id="EF134388">
    <property type="protein sequence ID" value="ABV22485.1"/>
    <property type="molecule type" value="mRNA"/>
</dbReference>
<dbReference type="SMR" id="A3E3H0"/>
<dbReference type="GO" id="GO:0016460">
    <property type="term" value="C:myosin II complex"/>
    <property type="evidence" value="ECO:0007669"/>
    <property type="project" value="TreeGrafter"/>
</dbReference>
<dbReference type="GO" id="GO:0005509">
    <property type="term" value="F:calcium ion binding"/>
    <property type="evidence" value="ECO:0007669"/>
    <property type="project" value="InterPro"/>
</dbReference>
<dbReference type="CDD" id="cd00051">
    <property type="entry name" value="EFh"/>
    <property type="match status" value="2"/>
</dbReference>
<dbReference type="FunFam" id="1.10.238.10:FF:000034">
    <property type="entry name" value="Calmodulin"/>
    <property type="match status" value="1"/>
</dbReference>
<dbReference type="FunFam" id="1.10.238.10:FF:000042">
    <property type="entry name" value="Calmodulin"/>
    <property type="match status" value="1"/>
</dbReference>
<dbReference type="Gene3D" id="1.10.238.10">
    <property type="entry name" value="EF-hand"/>
    <property type="match status" value="3"/>
</dbReference>
<dbReference type="InterPro" id="IPR050230">
    <property type="entry name" value="CALM/Myosin/TropC-like"/>
</dbReference>
<dbReference type="InterPro" id="IPR011992">
    <property type="entry name" value="EF-hand-dom_pair"/>
</dbReference>
<dbReference type="InterPro" id="IPR018247">
    <property type="entry name" value="EF_Hand_1_Ca_BS"/>
</dbReference>
<dbReference type="InterPro" id="IPR002048">
    <property type="entry name" value="EF_hand_dom"/>
</dbReference>
<dbReference type="PANTHER" id="PTHR23048:SF0">
    <property type="entry name" value="CALMODULIN LIKE 3"/>
    <property type="match status" value="1"/>
</dbReference>
<dbReference type="PANTHER" id="PTHR23048">
    <property type="entry name" value="MYOSIN LIGHT CHAIN 1, 3"/>
    <property type="match status" value="1"/>
</dbReference>
<dbReference type="Pfam" id="PF13499">
    <property type="entry name" value="EF-hand_7"/>
    <property type="match status" value="2"/>
</dbReference>
<dbReference type="SMART" id="SM00054">
    <property type="entry name" value="EFh"/>
    <property type="match status" value="4"/>
</dbReference>
<dbReference type="SMART" id="SM01184">
    <property type="entry name" value="efhand_Ca_insen"/>
    <property type="match status" value="1"/>
</dbReference>
<dbReference type="SUPFAM" id="SSF47473">
    <property type="entry name" value="EF-hand"/>
    <property type="match status" value="1"/>
</dbReference>
<dbReference type="PROSITE" id="PS00018">
    <property type="entry name" value="EF_HAND_1"/>
    <property type="match status" value="4"/>
</dbReference>
<dbReference type="PROSITE" id="PS50222">
    <property type="entry name" value="EF_HAND_2"/>
    <property type="match status" value="4"/>
</dbReference>